<dbReference type="EMBL" id="DS027048">
    <property type="protein sequence ID" value="EAW13352.1"/>
    <property type="molecule type" value="Genomic_DNA"/>
</dbReference>
<dbReference type="RefSeq" id="XP_001274778.1">
    <property type="nucleotide sequence ID" value="XM_001274777.1"/>
</dbReference>
<dbReference type="SMR" id="A1C928"/>
<dbReference type="STRING" id="344612.A1C928"/>
<dbReference type="EnsemblFungi" id="EAW13352">
    <property type="protein sequence ID" value="EAW13352"/>
    <property type="gene ID" value="ACLA_053980"/>
</dbReference>
<dbReference type="GeneID" id="4707118"/>
<dbReference type="KEGG" id="act:ACLA_053980"/>
<dbReference type="VEuPathDB" id="FungiDB:ACLA_053980"/>
<dbReference type="eggNOG" id="KOG1974">
    <property type="taxonomic scope" value="Eukaryota"/>
</dbReference>
<dbReference type="HOGENOM" id="CLU_004390_0_0_1"/>
<dbReference type="OMA" id="VNHHRHT"/>
<dbReference type="OrthoDB" id="310853at2759"/>
<dbReference type="Proteomes" id="UP000006701">
    <property type="component" value="Unassembled WGS sequence"/>
</dbReference>
<dbReference type="GO" id="GO:0031298">
    <property type="term" value="C:replication fork protection complex"/>
    <property type="evidence" value="ECO:0007669"/>
    <property type="project" value="TreeGrafter"/>
</dbReference>
<dbReference type="GO" id="GO:0003677">
    <property type="term" value="F:DNA binding"/>
    <property type="evidence" value="ECO:0007669"/>
    <property type="project" value="TreeGrafter"/>
</dbReference>
<dbReference type="GO" id="GO:0006281">
    <property type="term" value="P:DNA repair"/>
    <property type="evidence" value="ECO:0007669"/>
    <property type="project" value="UniProtKB-KW"/>
</dbReference>
<dbReference type="GO" id="GO:0000076">
    <property type="term" value="P:DNA replication checkpoint signaling"/>
    <property type="evidence" value="ECO:0007669"/>
    <property type="project" value="TreeGrafter"/>
</dbReference>
<dbReference type="GO" id="GO:0051321">
    <property type="term" value="P:meiotic cell cycle"/>
    <property type="evidence" value="ECO:0007669"/>
    <property type="project" value="UniProtKB-KW"/>
</dbReference>
<dbReference type="GO" id="GO:0043111">
    <property type="term" value="P:replication fork arrest"/>
    <property type="evidence" value="ECO:0007669"/>
    <property type="project" value="TreeGrafter"/>
</dbReference>
<dbReference type="InterPro" id="IPR044998">
    <property type="entry name" value="Timeless"/>
</dbReference>
<dbReference type="InterPro" id="IPR006906">
    <property type="entry name" value="Timeless_N"/>
</dbReference>
<dbReference type="PANTHER" id="PTHR22940:SF4">
    <property type="entry name" value="PROTEIN TIMELESS HOMOLOG"/>
    <property type="match status" value="1"/>
</dbReference>
<dbReference type="PANTHER" id="PTHR22940">
    <property type="entry name" value="TIMEOUT/TIMELESS-2"/>
    <property type="match status" value="1"/>
</dbReference>
<dbReference type="Pfam" id="PF04821">
    <property type="entry name" value="TIMELESS"/>
    <property type="match status" value="1"/>
</dbReference>
<sequence length="1178" mass="135716">MDDEGAPLSESAQVVDPDVRAHVYSLVTALGGFNGENADRYVLGDDALACLRDIKRWLKLHDEKNNRMDVARCLGEANLVNGDLLPILTLWSTSGQNSKFMSRIALACLELLVPLTWPLELHSEMTVNHHRHTPYLQQAQVLYKRGILGPGGSSLLRTIIRIGLPSMAVPRSDRTTRDEGILKLMLYLLRNIAVISPHSRLSAEGDEEETSRSATINAFQDQDAFALLLTMCSNVADDFNLQDVVLLEILFHIVKGVNVEKLFMNDTQRKAKRTEELGDLLQKESSLRREYAKNAPTRHGRFGTMIWVKRDDAKVSTVSGQDVLKDSQTTLYKMDQSKKWNKPQVRRRQTEVTVNNDFNTPVNLNSTATKNLRIFIEEFLDSGFNPLFTHVRKAIEREADRIMDINSRHYFYTVAWFLEAERVRRKYQRERHSQEDKSLKKMEPDSFALVASVLNQETFVFLNRSMQKSFDNKEVEDLTAEMRCFTQILLTVQEMAQSPLDDDQEVADNIQNRIFYEETTHDRIISIIRGYKDQGFGYLDACTQLAHVFLRMLEHYSKENVDMQIRSRRRIKRKAKQDDQAIDVEDEEHASEDEELMEAERVSKERKFDFKRFAAKFCNQKCVDTFVAFIKYYKELNTDQLKRAHRYFYRIAFKQEMSVLLFRLDIINLFYRMIKGPGALDSSKPIFKEWEELVRQILRRMIKKIDQRPALITELLFSKINSTVFYLEFGFEKQTISVSKRPPAELEVDPREAKTTDEKLSIVVRVMIKDEHINLVKWISEVLRLAADERESWESREQQPGEPTAPNPMIPVKPDDEACQKAMFSNAKLRLLMTLIGFERLGMEDVPGASWVVPSSFTSDDLRHTKRVIDQCLIEPATEDPDQDLSRLIRRKYANDARGGGRDEQNLDIDFGSDSEGEDNVPDGPLFPPNHRSKANALDQLKKQRQKRRKEDGDRETPDDEVLEERRRARLENALARQAKIKSDLYIHASDEESDEEADEEFFRLEEQRRKEQAARIKHALLHGVVEEISDKSSKKTGRKRQSDQHTTLNIDAHTKRQRRKNRTDKLDEGDDLVMAGTEAQSPDSPGLGSSSHDAKGIENTPLTSDEDELEFDDDLAFSRDRNRRKDFTPNVDKMVIEPAQQDADPAAPDEDDDEDAPVVGSSRRRVRGGFVIESDSE</sequence>
<comment type="function">
    <text evidence="1">Forms a fork protection complex (FPC) with csm3 and which is required for chromosome segregation during meiosis and DNA damage repair. FPC coordinates leading and lagging strand synthesis and moves with the replication fork. FPC stabilizes replication forks in a configuration that is recognized by replication checkpoint sensors (By similarity).</text>
</comment>
<comment type="subunit">
    <text evidence="1">Component of the fork protection complex (FPC) consisting of tof1 and csm3.</text>
</comment>
<comment type="subcellular location">
    <subcellularLocation>
        <location evidence="1">Nucleus</location>
    </subcellularLocation>
</comment>
<comment type="similarity">
    <text evidence="3">Belongs to the timeless family.</text>
</comment>
<keyword id="KW-0131">Cell cycle</keyword>
<keyword id="KW-0227">DNA damage</keyword>
<keyword id="KW-0234">DNA repair</keyword>
<keyword id="KW-0236">DNA replication inhibitor</keyword>
<keyword id="KW-0469">Meiosis</keyword>
<keyword id="KW-0539">Nucleus</keyword>
<keyword id="KW-1185">Reference proteome</keyword>
<evidence type="ECO:0000250" key="1"/>
<evidence type="ECO:0000256" key="2">
    <source>
        <dbReference type="SAM" id="MobiDB-lite"/>
    </source>
</evidence>
<evidence type="ECO:0000305" key="3"/>
<feature type="chain" id="PRO_0000301728" description="Topoisomerase 1-associated factor 1">
    <location>
        <begin position="1"/>
        <end position="1178"/>
    </location>
</feature>
<feature type="region of interest" description="Disordered" evidence="2">
    <location>
        <begin position="576"/>
        <end position="596"/>
    </location>
</feature>
<feature type="region of interest" description="Disordered" evidence="2">
    <location>
        <begin position="792"/>
        <end position="811"/>
    </location>
</feature>
<feature type="region of interest" description="Disordered" evidence="2">
    <location>
        <begin position="896"/>
        <end position="965"/>
    </location>
</feature>
<feature type="region of interest" description="Disordered" evidence="2">
    <location>
        <begin position="980"/>
        <end position="1178"/>
    </location>
</feature>
<feature type="compositionally biased region" description="Acidic residues" evidence="2">
    <location>
        <begin position="580"/>
        <end position="596"/>
    </location>
</feature>
<feature type="compositionally biased region" description="Basic and acidic residues" evidence="2">
    <location>
        <begin position="896"/>
        <end position="905"/>
    </location>
</feature>
<feature type="compositionally biased region" description="Acidic residues" evidence="2">
    <location>
        <begin position="911"/>
        <end position="921"/>
    </location>
</feature>
<feature type="compositionally biased region" description="Basic and acidic residues" evidence="2">
    <location>
        <begin position="981"/>
        <end position="991"/>
    </location>
</feature>
<feature type="compositionally biased region" description="Basic and acidic residues" evidence="2">
    <location>
        <begin position="1001"/>
        <end position="1015"/>
    </location>
</feature>
<feature type="compositionally biased region" description="Basic and acidic residues" evidence="2">
    <location>
        <begin position="1025"/>
        <end position="1034"/>
    </location>
</feature>
<feature type="compositionally biased region" description="Polar residues" evidence="2">
    <location>
        <begin position="1079"/>
        <end position="1092"/>
    </location>
</feature>
<feature type="compositionally biased region" description="Acidic residues" evidence="2">
    <location>
        <begin position="1105"/>
        <end position="1116"/>
    </location>
</feature>
<feature type="compositionally biased region" description="Basic and acidic residues" evidence="2">
    <location>
        <begin position="1117"/>
        <end position="1128"/>
    </location>
</feature>
<feature type="compositionally biased region" description="Low complexity" evidence="2">
    <location>
        <begin position="1138"/>
        <end position="1147"/>
    </location>
</feature>
<feature type="compositionally biased region" description="Acidic residues" evidence="2">
    <location>
        <begin position="1148"/>
        <end position="1157"/>
    </location>
</feature>
<organism>
    <name type="scientific">Aspergillus clavatus (strain ATCC 1007 / CBS 513.65 / DSM 816 / NCTC 3887 / NRRL 1 / QM 1276 / 107)</name>
    <dbReference type="NCBI Taxonomy" id="344612"/>
    <lineage>
        <taxon>Eukaryota</taxon>
        <taxon>Fungi</taxon>
        <taxon>Dikarya</taxon>
        <taxon>Ascomycota</taxon>
        <taxon>Pezizomycotina</taxon>
        <taxon>Eurotiomycetes</taxon>
        <taxon>Eurotiomycetidae</taxon>
        <taxon>Eurotiales</taxon>
        <taxon>Aspergillaceae</taxon>
        <taxon>Aspergillus</taxon>
        <taxon>Aspergillus subgen. Fumigati</taxon>
    </lineage>
</organism>
<proteinExistence type="inferred from homology"/>
<gene>
    <name type="primary">tof1</name>
    <name type="ORF">ACLA_053980</name>
</gene>
<reference key="1">
    <citation type="journal article" date="2008" name="PLoS Genet.">
        <title>Genomic islands in the pathogenic filamentous fungus Aspergillus fumigatus.</title>
        <authorList>
            <person name="Fedorova N.D."/>
            <person name="Khaldi N."/>
            <person name="Joardar V.S."/>
            <person name="Maiti R."/>
            <person name="Amedeo P."/>
            <person name="Anderson M.J."/>
            <person name="Crabtree J."/>
            <person name="Silva J.C."/>
            <person name="Badger J.H."/>
            <person name="Albarraq A."/>
            <person name="Angiuoli S."/>
            <person name="Bussey H."/>
            <person name="Bowyer P."/>
            <person name="Cotty P.J."/>
            <person name="Dyer P.S."/>
            <person name="Egan A."/>
            <person name="Galens K."/>
            <person name="Fraser-Liggett C.M."/>
            <person name="Haas B.J."/>
            <person name="Inman J.M."/>
            <person name="Kent R."/>
            <person name="Lemieux S."/>
            <person name="Malavazi I."/>
            <person name="Orvis J."/>
            <person name="Roemer T."/>
            <person name="Ronning C.M."/>
            <person name="Sundaram J.P."/>
            <person name="Sutton G."/>
            <person name="Turner G."/>
            <person name="Venter J.C."/>
            <person name="White O.R."/>
            <person name="Whitty B.R."/>
            <person name="Youngman P."/>
            <person name="Wolfe K.H."/>
            <person name="Goldman G.H."/>
            <person name="Wortman J.R."/>
            <person name="Jiang B."/>
            <person name="Denning D.W."/>
            <person name="Nierman W.C."/>
        </authorList>
    </citation>
    <scope>NUCLEOTIDE SEQUENCE [LARGE SCALE GENOMIC DNA]</scope>
    <source>
        <strain>ATCC 1007 / CBS 513.65 / DSM 816 / NCTC 3887 / NRRL 1 / QM 1276 / 107</strain>
    </source>
</reference>
<name>TOF1_ASPCL</name>
<accession>A1C928</accession>
<protein>
    <recommendedName>
        <fullName>Topoisomerase 1-associated factor 1</fullName>
    </recommendedName>
</protein>